<keyword id="KW-0963">Cytoplasm</keyword>
<keyword id="KW-0342">GTP-binding</keyword>
<keyword id="KW-0396">Initiation factor</keyword>
<keyword id="KW-0547">Nucleotide-binding</keyword>
<keyword id="KW-0648">Protein biosynthesis</keyword>
<gene>
    <name evidence="2" type="primary">infB</name>
    <name type="ordered locus">LBUL_1241</name>
</gene>
<reference key="1">
    <citation type="journal article" date="2006" name="Proc. Natl. Acad. Sci. U.S.A.">
        <title>Comparative genomics of the lactic acid bacteria.</title>
        <authorList>
            <person name="Makarova K.S."/>
            <person name="Slesarev A."/>
            <person name="Wolf Y.I."/>
            <person name="Sorokin A."/>
            <person name="Mirkin B."/>
            <person name="Koonin E.V."/>
            <person name="Pavlov A."/>
            <person name="Pavlova N."/>
            <person name="Karamychev V."/>
            <person name="Polouchine N."/>
            <person name="Shakhova V."/>
            <person name="Grigoriev I."/>
            <person name="Lou Y."/>
            <person name="Rohksar D."/>
            <person name="Lucas S."/>
            <person name="Huang K."/>
            <person name="Goodstein D.M."/>
            <person name="Hawkins T."/>
            <person name="Plengvidhya V."/>
            <person name="Welker D."/>
            <person name="Hughes J."/>
            <person name="Goh Y."/>
            <person name="Benson A."/>
            <person name="Baldwin K."/>
            <person name="Lee J.-H."/>
            <person name="Diaz-Muniz I."/>
            <person name="Dosti B."/>
            <person name="Smeianov V."/>
            <person name="Wechter W."/>
            <person name="Barabote R."/>
            <person name="Lorca G."/>
            <person name="Altermann E."/>
            <person name="Barrangou R."/>
            <person name="Ganesan B."/>
            <person name="Xie Y."/>
            <person name="Rawsthorne H."/>
            <person name="Tamir D."/>
            <person name="Parker C."/>
            <person name="Breidt F."/>
            <person name="Broadbent J.R."/>
            <person name="Hutkins R."/>
            <person name="O'Sullivan D."/>
            <person name="Steele J."/>
            <person name="Unlu G."/>
            <person name="Saier M.H. Jr."/>
            <person name="Klaenhammer T."/>
            <person name="Richardson P."/>
            <person name="Kozyavkin S."/>
            <person name="Weimer B.C."/>
            <person name="Mills D.A."/>
        </authorList>
    </citation>
    <scope>NUCLEOTIDE SEQUENCE [LARGE SCALE GENOMIC DNA]</scope>
    <source>
        <strain>ATCC BAA-365 / Lb-18</strain>
    </source>
</reference>
<feature type="chain" id="PRO_1000008261" description="Translation initiation factor IF-2">
    <location>
        <begin position="1"/>
        <end position="825"/>
    </location>
</feature>
<feature type="domain" description="tr-type G">
    <location>
        <begin position="326"/>
        <end position="495"/>
    </location>
</feature>
<feature type="region of interest" description="Disordered" evidence="3">
    <location>
        <begin position="1"/>
        <end position="239"/>
    </location>
</feature>
<feature type="region of interest" description="G1" evidence="1">
    <location>
        <begin position="335"/>
        <end position="342"/>
    </location>
</feature>
<feature type="region of interest" description="G2" evidence="1">
    <location>
        <begin position="360"/>
        <end position="364"/>
    </location>
</feature>
<feature type="region of interest" description="G3" evidence="1">
    <location>
        <begin position="381"/>
        <end position="384"/>
    </location>
</feature>
<feature type="region of interest" description="G4" evidence="1">
    <location>
        <begin position="435"/>
        <end position="438"/>
    </location>
</feature>
<feature type="region of interest" description="G5" evidence="1">
    <location>
        <begin position="471"/>
        <end position="473"/>
    </location>
</feature>
<feature type="compositionally biased region" description="Basic and acidic residues" evidence="3">
    <location>
        <begin position="1"/>
        <end position="19"/>
    </location>
</feature>
<feature type="compositionally biased region" description="Basic and acidic residues" evidence="3">
    <location>
        <begin position="35"/>
        <end position="45"/>
    </location>
</feature>
<feature type="compositionally biased region" description="Basic and acidic residues" evidence="3">
    <location>
        <begin position="70"/>
        <end position="98"/>
    </location>
</feature>
<feature type="compositionally biased region" description="Basic and acidic residues" evidence="3">
    <location>
        <begin position="113"/>
        <end position="122"/>
    </location>
</feature>
<feature type="compositionally biased region" description="Low complexity" evidence="3">
    <location>
        <begin position="158"/>
        <end position="169"/>
    </location>
</feature>
<feature type="compositionally biased region" description="Basic residues" evidence="3">
    <location>
        <begin position="181"/>
        <end position="191"/>
    </location>
</feature>
<feature type="compositionally biased region" description="Polar residues" evidence="3">
    <location>
        <begin position="194"/>
        <end position="208"/>
    </location>
</feature>
<feature type="compositionally biased region" description="Basic residues" evidence="3">
    <location>
        <begin position="211"/>
        <end position="220"/>
    </location>
</feature>
<feature type="binding site" evidence="2">
    <location>
        <begin position="335"/>
        <end position="342"/>
    </location>
    <ligand>
        <name>GTP</name>
        <dbReference type="ChEBI" id="CHEBI:37565"/>
    </ligand>
</feature>
<feature type="binding site" evidence="2">
    <location>
        <begin position="381"/>
        <end position="385"/>
    </location>
    <ligand>
        <name>GTP</name>
        <dbReference type="ChEBI" id="CHEBI:37565"/>
    </ligand>
</feature>
<feature type="binding site" evidence="2">
    <location>
        <begin position="435"/>
        <end position="438"/>
    </location>
    <ligand>
        <name>GTP</name>
        <dbReference type="ChEBI" id="CHEBI:37565"/>
    </ligand>
</feature>
<evidence type="ECO:0000250" key="1"/>
<evidence type="ECO:0000255" key="2">
    <source>
        <dbReference type="HAMAP-Rule" id="MF_00100"/>
    </source>
</evidence>
<evidence type="ECO:0000256" key="3">
    <source>
        <dbReference type="SAM" id="MobiDB-lite"/>
    </source>
</evidence>
<comment type="function">
    <text evidence="2">One of the essential components for the initiation of protein synthesis. Protects formylmethionyl-tRNA from spontaneous hydrolysis and promotes its binding to the 30S ribosomal subunits. Also involved in the hydrolysis of GTP during the formation of the 70S ribosomal complex.</text>
</comment>
<comment type="subcellular location">
    <subcellularLocation>
        <location evidence="2">Cytoplasm</location>
    </subcellularLocation>
</comment>
<comment type="similarity">
    <text evidence="2">Belongs to the TRAFAC class translation factor GTPase superfamily. Classic translation factor GTPase family. IF-2 subfamily.</text>
</comment>
<name>IF2_LACDB</name>
<sequence length="825" mass="90849">MTKKQENETSKELGMDNKKTSGKSGKLKISVSAIRKGEKKTEGKRSNARRRANNHSNDHSKRRRPAAQDLLKDLKQKQRADEARLDQESKAAKQEYKKSLNKAEASESKPVVKKVESVEKPAETAAEAPKVRGPKILKPSPARLKQNQANSEKPAAKPSSSRRPSSRPSFTEAPMPENKEGRRRKSGKPGRKGQNSYADQGRGANSNRSEQRKRKNKKHQSAPQVKKQVTQRKDRPLPESFEYEVGMNAQDLGKILHREPAEIVKKLFMLGIMINQNRSLDKDTIELLAADYGIEAVEKVHEDISDIDNIFAQEMEESKNSENQVVRPPVVTIMGHVDHGKTTLLDRLRHTRVSEHEAGGITQNIGAYQVRINDRLITFLDTPGHAAFSSMRARGAEITDIVVLIVAADDGVMPQTIEAIDHAKSAGVPIIVAINKMDRPGANPAHVTEQLMQYELIPENYGGSTIFVNISAKTGMGIDELLENIILEADMLELKADPKQKAIGTVVEARLSRGKGPVADVLIQQGTLRVGDPIVVGDTFGRVRTMTNDKGHQVKKATPSMPVEITGLNDVPESADKLVVFADEKTARAVGEARAQQSLQKQRENVQHVTLDNLFDTMKRESMKSVDIVLKADVQGSAEALAQSFQKIDVEGVRVNIIHSGVGAINESDVTLASASNALIIGFNVRPTATAKSQAAQEGVDIRLYSIIYKAIDDVKAAMQGMLEPTYEEKVIGNLTVRETWKVSKIGTIAGAFVDNGYVTRESGIRVIRDGVVKYDGKVASLRRFKDDVKEVKAGFDCGLTIENFNDIKEGDELEAYEMQEVKPG</sequence>
<protein>
    <recommendedName>
        <fullName evidence="2">Translation initiation factor IF-2</fullName>
    </recommendedName>
</protein>
<dbReference type="EMBL" id="CP000412">
    <property type="protein sequence ID" value="ABJ58767.1"/>
    <property type="molecule type" value="Genomic_DNA"/>
</dbReference>
<dbReference type="RefSeq" id="WP_003618592.1">
    <property type="nucleotide sequence ID" value="NC_008529.1"/>
</dbReference>
<dbReference type="SMR" id="Q049V5"/>
<dbReference type="KEGG" id="lbu:LBUL_1241"/>
<dbReference type="HOGENOM" id="CLU_006301_5_0_9"/>
<dbReference type="BioCyc" id="LDEL321956:LBUL_RS05825-MONOMER"/>
<dbReference type="GO" id="GO:0005829">
    <property type="term" value="C:cytosol"/>
    <property type="evidence" value="ECO:0007669"/>
    <property type="project" value="TreeGrafter"/>
</dbReference>
<dbReference type="GO" id="GO:0005525">
    <property type="term" value="F:GTP binding"/>
    <property type="evidence" value="ECO:0007669"/>
    <property type="project" value="UniProtKB-KW"/>
</dbReference>
<dbReference type="GO" id="GO:0003924">
    <property type="term" value="F:GTPase activity"/>
    <property type="evidence" value="ECO:0007669"/>
    <property type="project" value="UniProtKB-UniRule"/>
</dbReference>
<dbReference type="GO" id="GO:0003743">
    <property type="term" value="F:translation initiation factor activity"/>
    <property type="evidence" value="ECO:0007669"/>
    <property type="project" value="UniProtKB-UniRule"/>
</dbReference>
<dbReference type="CDD" id="cd01887">
    <property type="entry name" value="IF2_eIF5B"/>
    <property type="match status" value="1"/>
</dbReference>
<dbReference type="CDD" id="cd03702">
    <property type="entry name" value="IF2_mtIF2_II"/>
    <property type="match status" value="1"/>
</dbReference>
<dbReference type="CDD" id="cd03692">
    <property type="entry name" value="mtIF2_IVc"/>
    <property type="match status" value="1"/>
</dbReference>
<dbReference type="FunFam" id="2.40.30.10:FF:000007">
    <property type="entry name" value="Translation initiation factor IF-2"/>
    <property type="match status" value="1"/>
</dbReference>
<dbReference type="FunFam" id="2.40.30.10:FF:000008">
    <property type="entry name" value="Translation initiation factor IF-2"/>
    <property type="match status" value="1"/>
</dbReference>
<dbReference type="FunFam" id="3.40.50.10050:FF:000001">
    <property type="entry name" value="Translation initiation factor IF-2"/>
    <property type="match status" value="1"/>
</dbReference>
<dbReference type="FunFam" id="3.40.50.300:FF:000019">
    <property type="entry name" value="Translation initiation factor IF-2"/>
    <property type="match status" value="1"/>
</dbReference>
<dbReference type="Gene3D" id="3.40.50.300">
    <property type="entry name" value="P-loop containing nucleotide triphosphate hydrolases"/>
    <property type="match status" value="1"/>
</dbReference>
<dbReference type="Gene3D" id="2.40.30.10">
    <property type="entry name" value="Translation factors"/>
    <property type="match status" value="2"/>
</dbReference>
<dbReference type="Gene3D" id="3.40.50.10050">
    <property type="entry name" value="Translation initiation factor IF- 2, domain 3"/>
    <property type="match status" value="1"/>
</dbReference>
<dbReference type="HAMAP" id="MF_00100_B">
    <property type="entry name" value="IF_2_B"/>
    <property type="match status" value="1"/>
</dbReference>
<dbReference type="InterPro" id="IPR053905">
    <property type="entry name" value="EF-G-like_DII"/>
</dbReference>
<dbReference type="InterPro" id="IPR044145">
    <property type="entry name" value="IF2_II"/>
</dbReference>
<dbReference type="InterPro" id="IPR006847">
    <property type="entry name" value="IF2_N"/>
</dbReference>
<dbReference type="InterPro" id="IPR027417">
    <property type="entry name" value="P-loop_NTPase"/>
</dbReference>
<dbReference type="InterPro" id="IPR005225">
    <property type="entry name" value="Small_GTP-bd"/>
</dbReference>
<dbReference type="InterPro" id="IPR000795">
    <property type="entry name" value="T_Tr_GTP-bd_dom"/>
</dbReference>
<dbReference type="InterPro" id="IPR000178">
    <property type="entry name" value="TF_IF2_bacterial-like"/>
</dbReference>
<dbReference type="InterPro" id="IPR015760">
    <property type="entry name" value="TIF_IF2"/>
</dbReference>
<dbReference type="InterPro" id="IPR023115">
    <property type="entry name" value="TIF_IF2_dom3"/>
</dbReference>
<dbReference type="InterPro" id="IPR036925">
    <property type="entry name" value="TIF_IF2_dom3_sf"/>
</dbReference>
<dbReference type="InterPro" id="IPR009000">
    <property type="entry name" value="Transl_B-barrel_sf"/>
</dbReference>
<dbReference type="NCBIfam" id="TIGR00487">
    <property type="entry name" value="IF-2"/>
    <property type="match status" value="1"/>
</dbReference>
<dbReference type="NCBIfam" id="TIGR00231">
    <property type="entry name" value="small_GTP"/>
    <property type="match status" value="1"/>
</dbReference>
<dbReference type="PANTHER" id="PTHR43381:SF5">
    <property type="entry name" value="TR-TYPE G DOMAIN-CONTAINING PROTEIN"/>
    <property type="match status" value="1"/>
</dbReference>
<dbReference type="PANTHER" id="PTHR43381">
    <property type="entry name" value="TRANSLATION INITIATION FACTOR IF-2-RELATED"/>
    <property type="match status" value="1"/>
</dbReference>
<dbReference type="Pfam" id="PF22042">
    <property type="entry name" value="EF-G_D2"/>
    <property type="match status" value="1"/>
</dbReference>
<dbReference type="Pfam" id="PF00009">
    <property type="entry name" value="GTP_EFTU"/>
    <property type="match status" value="1"/>
</dbReference>
<dbReference type="Pfam" id="PF11987">
    <property type="entry name" value="IF-2"/>
    <property type="match status" value="1"/>
</dbReference>
<dbReference type="Pfam" id="PF04760">
    <property type="entry name" value="IF2_N"/>
    <property type="match status" value="1"/>
</dbReference>
<dbReference type="SUPFAM" id="SSF52156">
    <property type="entry name" value="Initiation factor IF2/eIF5b, domain 3"/>
    <property type="match status" value="1"/>
</dbReference>
<dbReference type="SUPFAM" id="SSF52540">
    <property type="entry name" value="P-loop containing nucleoside triphosphate hydrolases"/>
    <property type="match status" value="1"/>
</dbReference>
<dbReference type="SUPFAM" id="SSF50447">
    <property type="entry name" value="Translation proteins"/>
    <property type="match status" value="2"/>
</dbReference>
<dbReference type="PROSITE" id="PS51722">
    <property type="entry name" value="G_TR_2"/>
    <property type="match status" value="1"/>
</dbReference>
<dbReference type="PROSITE" id="PS01176">
    <property type="entry name" value="IF2"/>
    <property type="match status" value="1"/>
</dbReference>
<organism>
    <name type="scientific">Lactobacillus delbrueckii subsp. bulgaricus (strain ATCC BAA-365 / Lb-18)</name>
    <dbReference type="NCBI Taxonomy" id="321956"/>
    <lineage>
        <taxon>Bacteria</taxon>
        <taxon>Bacillati</taxon>
        <taxon>Bacillota</taxon>
        <taxon>Bacilli</taxon>
        <taxon>Lactobacillales</taxon>
        <taxon>Lactobacillaceae</taxon>
        <taxon>Lactobacillus</taxon>
    </lineage>
</organism>
<accession>Q049V5</accession>
<proteinExistence type="inferred from homology"/>